<organism>
    <name type="scientific">Candida tropicalis (strain ATCC MYA-3404 / T1)</name>
    <name type="common">Yeast</name>
    <dbReference type="NCBI Taxonomy" id="294747"/>
    <lineage>
        <taxon>Eukaryota</taxon>
        <taxon>Fungi</taxon>
        <taxon>Dikarya</taxon>
        <taxon>Ascomycota</taxon>
        <taxon>Saccharomycotina</taxon>
        <taxon>Pichiomycetes</taxon>
        <taxon>Debaryomycetaceae</taxon>
        <taxon>Candida/Lodderomyces clade</taxon>
        <taxon>Candida</taxon>
    </lineage>
</organism>
<evidence type="ECO:0000250" key="1"/>
<evidence type="ECO:0000255" key="2"/>
<evidence type="ECO:0000305" key="3"/>
<gene>
    <name type="primary">LCL2</name>
    <name type="ORF">CTRG_00641</name>
</gene>
<keyword id="KW-1185">Reference proteome</keyword>
<keyword id="KW-0732">Signal</keyword>
<comment type="function">
    <text evidence="1">Probable component of the endoplasmic reticulum-associated degradation (ERAD) pathway.</text>
</comment>
<comment type="similarity">
    <text evidence="3">Belongs to the LCL2 family.</text>
</comment>
<sequence>MQYLLVALSLFISLSSANLFDFLNNFNHGGGGRQQQQGARNPQEYENRILNSQCDQYLCPDTGLCVESPKFCPCPYPSSQIRCFLPDGRFVCISKPAGEGISDKYNDPKTNWKIDAKDDNIRDCGWVNRAWRGLV</sequence>
<name>LCL2_CANTT</name>
<reference key="1">
    <citation type="journal article" date="2009" name="Nature">
        <title>Evolution of pathogenicity and sexual reproduction in eight Candida genomes.</title>
        <authorList>
            <person name="Butler G."/>
            <person name="Rasmussen M.D."/>
            <person name="Lin M.F."/>
            <person name="Santos M.A.S."/>
            <person name="Sakthikumar S."/>
            <person name="Munro C.A."/>
            <person name="Rheinbay E."/>
            <person name="Grabherr M."/>
            <person name="Forche A."/>
            <person name="Reedy J.L."/>
            <person name="Agrafioti I."/>
            <person name="Arnaud M.B."/>
            <person name="Bates S."/>
            <person name="Brown A.J.P."/>
            <person name="Brunke S."/>
            <person name="Costanzo M.C."/>
            <person name="Fitzpatrick D.A."/>
            <person name="de Groot P.W.J."/>
            <person name="Harris D."/>
            <person name="Hoyer L.L."/>
            <person name="Hube B."/>
            <person name="Klis F.M."/>
            <person name="Kodira C."/>
            <person name="Lennard N."/>
            <person name="Logue M.E."/>
            <person name="Martin R."/>
            <person name="Neiman A.M."/>
            <person name="Nikolaou E."/>
            <person name="Quail M.A."/>
            <person name="Quinn J."/>
            <person name="Santos M.C."/>
            <person name="Schmitzberger F.F."/>
            <person name="Sherlock G."/>
            <person name="Shah P."/>
            <person name="Silverstein K.A.T."/>
            <person name="Skrzypek M.S."/>
            <person name="Soll D."/>
            <person name="Staggs R."/>
            <person name="Stansfield I."/>
            <person name="Stumpf M.P.H."/>
            <person name="Sudbery P.E."/>
            <person name="Srikantha T."/>
            <person name="Zeng Q."/>
            <person name="Berman J."/>
            <person name="Berriman M."/>
            <person name="Heitman J."/>
            <person name="Gow N.A.R."/>
            <person name="Lorenz M.C."/>
            <person name="Birren B.W."/>
            <person name="Kellis M."/>
            <person name="Cuomo C.A."/>
        </authorList>
    </citation>
    <scope>NUCLEOTIDE SEQUENCE [LARGE SCALE GENOMIC DNA]</scope>
    <source>
        <strain>ATCC MYA-3404 / T1</strain>
    </source>
</reference>
<proteinExistence type="inferred from homology"/>
<feature type="signal peptide" evidence="2">
    <location>
        <begin position="1"/>
        <end position="17"/>
    </location>
</feature>
<feature type="chain" id="PRO_0000408602" description="Long chronological lifespan protein 2">
    <location>
        <begin position="18"/>
        <end position="135"/>
    </location>
</feature>
<accession>C5M3K2</accession>
<protein>
    <recommendedName>
        <fullName>Long chronological lifespan protein 2</fullName>
    </recommendedName>
</protein>
<dbReference type="EMBL" id="GG692395">
    <property type="protein sequence ID" value="EER35902.1"/>
    <property type="molecule type" value="Genomic_DNA"/>
</dbReference>
<dbReference type="RefSeq" id="XP_002545860.1">
    <property type="nucleotide sequence ID" value="XM_002545814.1"/>
</dbReference>
<dbReference type="SMR" id="C5M3K2"/>
<dbReference type="STRING" id="294747.C5M3K2"/>
<dbReference type="EnsemblFungi" id="CTRG_00641-t43_1">
    <property type="protein sequence ID" value="CTRG_00641-t43_1-p1"/>
    <property type="gene ID" value="CTRG_00641"/>
</dbReference>
<dbReference type="GeneID" id="8296868"/>
<dbReference type="KEGG" id="ctp:CTRG_00641"/>
<dbReference type="VEuPathDB" id="FungiDB:CTRG_00641"/>
<dbReference type="eggNOG" id="ENOG502S416">
    <property type="taxonomic scope" value="Eukaryota"/>
</dbReference>
<dbReference type="HOGENOM" id="CLU_142363_1_0_1"/>
<dbReference type="OrthoDB" id="2234316at2759"/>
<dbReference type="Proteomes" id="UP000002037">
    <property type="component" value="Unassembled WGS sequence"/>
</dbReference>
<dbReference type="GO" id="GO:0036503">
    <property type="term" value="P:ERAD pathway"/>
    <property type="evidence" value="ECO:0007669"/>
    <property type="project" value="TreeGrafter"/>
</dbReference>
<dbReference type="CDD" id="cd23996">
    <property type="entry name" value="LCL2-like"/>
    <property type="match status" value="1"/>
</dbReference>
<dbReference type="InterPro" id="IPR034543">
    <property type="entry name" value="LCL2"/>
</dbReference>
<dbReference type="PANTHER" id="PTHR38425">
    <property type="entry name" value="LONG CHRONOLOGICAL LIFESPAN PROTEIN 2"/>
    <property type="match status" value="1"/>
</dbReference>
<dbReference type="PANTHER" id="PTHR38425:SF1">
    <property type="entry name" value="LONG CHRONOLOGICAL LIFESPAN PROTEIN 2"/>
    <property type="match status" value="1"/>
</dbReference>